<name>DEFB2_ORNAN</name>
<accession>P0C8A6</accession>
<feature type="signal peptide" evidence="2">
    <location>
        <begin position="1"/>
        <end position="23"/>
    </location>
</feature>
<feature type="peptide" id="PRO_0000352721" description="Defensin-B2">
    <location>
        <begin position="24"/>
        <end position="65"/>
    </location>
</feature>
<feature type="disulfide bond" evidence="1">
    <location>
        <begin position="29"/>
        <end position="56"/>
    </location>
</feature>
<feature type="disulfide bond" evidence="1">
    <location>
        <begin position="36"/>
        <end position="50"/>
    </location>
</feature>
<feature type="disulfide bond" evidence="1">
    <location>
        <begin position="40"/>
        <end position="57"/>
    </location>
</feature>
<protein>
    <recommendedName>
        <fullName evidence="7 8">Defensin-B2</fullName>
        <shortName evidence="4">DefB2</shortName>
        <shortName evidence="5">OaDefB2</shortName>
    </recommendedName>
</protein>
<sequence length="65" mass="7435">MEARVLLLCAVLFLLVHTPPAAGGLNNKCAYFRGQCRRKCPQRDIFFGFCRNHDQCCLSSLHTRH</sequence>
<comment type="function">
    <text evidence="1">Has antimicrobial activity.</text>
</comment>
<comment type="subcellular location">
    <subcellularLocation>
        <location evidence="1">Secreted</location>
    </subcellularLocation>
</comment>
<comment type="tissue specificity">
    <text evidence="3">Lowly expressed in spleen, and lung.</text>
</comment>
<comment type="similarity">
    <text evidence="6">Belongs to the beta-defensin family.</text>
</comment>
<comment type="online information" name="Platypus resources">
    <link uri="https://www.twinkl.ch/search?q=platypus"/>
</comment>
<organism>
    <name type="scientific">Ornithorhynchus anatinus</name>
    <name type="common">Duckbill platypus</name>
    <dbReference type="NCBI Taxonomy" id="9258"/>
    <lineage>
        <taxon>Eukaryota</taxon>
        <taxon>Metazoa</taxon>
        <taxon>Chordata</taxon>
        <taxon>Craniata</taxon>
        <taxon>Vertebrata</taxon>
        <taxon>Euteleostomi</taxon>
        <taxon>Mammalia</taxon>
        <taxon>Monotremata</taxon>
        <taxon>Ornithorhynchidae</taxon>
        <taxon>Ornithorhynchus</taxon>
    </lineage>
</organism>
<evidence type="ECO:0000250" key="1"/>
<evidence type="ECO:0000255" key="2"/>
<evidence type="ECO:0000269" key="3">
    <source>
    </source>
</evidence>
<evidence type="ECO:0000303" key="4">
    <source>
    </source>
</evidence>
<evidence type="ECO:0000303" key="5">
    <source>
    </source>
</evidence>
<evidence type="ECO:0000305" key="6"/>
<evidence type="ECO:0000305" key="7">
    <source>
    </source>
</evidence>
<evidence type="ECO:0000305" key="8">
    <source>
    </source>
</evidence>
<reference key="1">
    <citation type="journal article" date="2008" name="Genome Res.">
        <title>Defensins and the convergent evolution of platypus and reptile venom genes.</title>
        <authorList>
            <person name="Whittington C.M."/>
            <person name="Papenfuss A.T."/>
            <person name="Bansal P."/>
            <person name="Torres A.M."/>
            <person name="Wong E.S."/>
            <person name="Deakin J.E."/>
            <person name="Graves T."/>
            <person name="Alsop A."/>
            <person name="Schatzkamer K."/>
            <person name="Kremitzki C."/>
            <person name="Ponting C.P."/>
            <person name="Temple-Smith P."/>
            <person name="Warren W.C."/>
            <person name="Kuchel P.W."/>
            <person name="Belov K."/>
        </authorList>
    </citation>
    <scope>NUCLEOTIDE SEQUENCE [MRNA]</scope>
</reference>
<reference key="2">
    <citation type="journal article" date="2008" name="Toxicon">
        <title>Expression patterns of platypus defensin and related venom genes across a range of tissue types reveal the possibility of broader functions for OvDLPs than previously suspected.</title>
        <authorList>
            <person name="Whittington C.M."/>
            <person name="Papenfuss A.T."/>
            <person name="Kuchel P.W."/>
            <person name="Belov K."/>
        </authorList>
    </citation>
    <scope>TISSUE SPECIFICITY</scope>
</reference>
<proteinExistence type="evidence at transcript level"/>
<dbReference type="SMR" id="P0C8A6"/>
<dbReference type="Ensembl" id="ENSOANT00000057252.1">
    <property type="protein sequence ID" value="ENSOANP00000041954.1"/>
    <property type="gene ID" value="ENSOANG00000044628.1"/>
</dbReference>
<dbReference type="InParanoid" id="P0C8A6"/>
<dbReference type="Proteomes" id="UP000002279">
    <property type="component" value="Chromosome X2"/>
</dbReference>
<dbReference type="GO" id="GO:0005576">
    <property type="term" value="C:extracellular region"/>
    <property type="evidence" value="ECO:0007669"/>
    <property type="project" value="UniProtKB-SubCell"/>
</dbReference>
<dbReference type="GO" id="GO:0042742">
    <property type="term" value="P:defense response to bacterium"/>
    <property type="evidence" value="ECO:0007669"/>
    <property type="project" value="UniProtKB-KW"/>
</dbReference>
<dbReference type="GO" id="GO:0045087">
    <property type="term" value="P:innate immune response"/>
    <property type="evidence" value="ECO:0007669"/>
    <property type="project" value="InterPro"/>
</dbReference>
<dbReference type="Gene3D" id="3.10.360.10">
    <property type="entry name" value="Antimicrobial Peptide, Beta-defensin 2, Chain A"/>
    <property type="match status" value="1"/>
</dbReference>
<dbReference type="InterPro" id="IPR050544">
    <property type="entry name" value="Beta-defensin"/>
</dbReference>
<dbReference type="InterPro" id="IPR025933">
    <property type="entry name" value="Beta_defensin_dom"/>
</dbReference>
<dbReference type="PANTHER" id="PTHR15001:SF3">
    <property type="entry name" value="BETA-DEFENSIN 123"/>
    <property type="match status" value="1"/>
</dbReference>
<dbReference type="PANTHER" id="PTHR15001">
    <property type="entry name" value="BETA-DEFENSIN 123-RELATED"/>
    <property type="match status" value="1"/>
</dbReference>
<dbReference type="Pfam" id="PF13841">
    <property type="entry name" value="Defensin_beta_2"/>
    <property type="match status" value="1"/>
</dbReference>
<keyword id="KW-0044">Antibiotic</keyword>
<keyword id="KW-0929">Antimicrobial</keyword>
<keyword id="KW-0211">Defensin</keyword>
<keyword id="KW-1015">Disulfide bond</keyword>
<keyword id="KW-1185">Reference proteome</keyword>
<keyword id="KW-0964">Secreted</keyword>
<keyword id="KW-0732">Signal</keyword>